<organism>
    <name type="scientific">Herpetosiphon aurantiacus (strain ATCC 23779 / DSM 785 / 114-95)</name>
    <dbReference type="NCBI Taxonomy" id="316274"/>
    <lineage>
        <taxon>Bacteria</taxon>
        <taxon>Bacillati</taxon>
        <taxon>Chloroflexota</taxon>
        <taxon>Chloroflexia</taxon>
        <taxon>Herpetosiphonales</taxon>
        <taxon>Herpetosiphonaceae</taxon>
        <taxon>Herpetosiphon</taxon>
    </lineage>
</organism>
<keyword id="KW-0963">Cytoplasm</keyword>
<keyword id="KW-0570">Pentose shunt</keyword>
<keyword id="KW-0704">Schiff base</keyword>
<keyword id="KW-0808">Transferase</keyword>
<gene>
    <name evidence="1" type="primary">tal</name>
    <name type="ordered locus">Haur_4411</name>
</gene>
<reference key="1">
    <citation type="journal article" date="2011" name="Stand. Genomic Sci.">
        <title>Complete genome sequence of the filamentous gliding predatory bacterium Herpetosiphon aurantiacus type strain (114-95(T)).</title>
        <authorList>
            <person name="Kiss H."/>
            <person name="Nett M."/>
            <person name="Domin N."/>
            <person name="Martin K."/>
            <person name="Maresca J.A."/>
            <person name="Copeland A."/>
            <person name="Lapidus A."/>
            <person name="Lucas S."/>
            <person name="Berry K.W."/>
            <person name="Glavina Del Rio T."/>
            <person name="Dalin E."/>
            <person name="Tice H."/>
            <person name="Pitluck S."/>
            <person name="Richardson P."/>
            <person name="Bruce D."/>
            <person name="Goodwin L."/>
            <person name="Han C."/>
            <person name="Detter J.C."/>
            <person name="Schmutz J."/>
            <person name="Brettin T."/>
            <person name="Land M."/>
            <person name="Hauser L."/>
            <person name="Kyrpides N.C."/>
            <person name="Ivanova N."/>
            <person name="Goeker M."/>
            <person name="Woyke T."/>
            <person name="Klenk H.P."/>
            <person name="Bryant D.A."/>
        </authorList>
    </citation>
    <scope>NUCLEOTIDE SEQUENCE [LARGE SCALE GENOMIC DNA]</scope>
    <source>
        <strain>ATCC 23779 / DSM 785 / 114-95</strain>
    </source>
</reference>
<proteinExistence type="inferred from homology"/>
<sequence length="221" mass="23819">MKIFLDTADVEEIRQGVAMGVVDGVTTNPSLAAKAGRNFRDVVLEIVEICPGPVSAETVALQADEIVREGRILAKWAPNIVVKVPLMAEGLKAVKQLTSEGIKTNVTLIFSASQALLAAKAGATFVSPFLGRLDDIGQDGMILIRDIVQIFKNYNIQTEVLAASIRHPVHVLQSALAGSHVATMPFKVLQQLVKHPLTDKGIETFLVDWQQVPDAATVFAE</sequence>
<dbReference type="EC" id="2.2.1.2" evidence="1"/>
<dbReference type="EMBL" id="CP000875">
    <property type="protein sequence ID" value="ABX07043.1"/>
    <property type="molecule type" value="Genomic_DNA"/>
</dbReference>
<dbReference type="SMR" id="A9AZ03"/>
<dbReference type="FunCoup" id="A9AZ03">
    <property type="interactions" value="304"/>
</dbReference>
<dbReference type="STRING" id="316274.Haur_4411"/>
<dbReference type="KEGG" id="hau:Haur_4411"/>
<dbReference type="eggNOG" id="COG0176">
    <property type="taxonomic scope" value="Bacteria"/>
</dbReference>
<dbReference type="HOGENOM" id="CLU_079764_0_0_0"/>
<dbReference type="InParanoid" id="A9AZ03"/>
<dbReference type="UniPathway" id="UPA00115">
    <property type="reaction ID" value="UER00414"/>
</dbReference>
<dbReference type="Proteomes" id="UP000000787">
    <property type="component" value="Chromosome"/>
</dbReference>
<dbReference type="GO" id="GO:0005737">
    <property type="term" value="C:cytoplasm"/>
    <property type="evidence" value="ECO:0007669"/>
    <property type="project" value="UniProtKB-SubCell"/>
</dbReference>
<dbReference type="GO" id="GO:0016832">
    <property type="term" value="F:aldehyde-lyase activity"/>
    <property type="evidence" value="ECO:0007669"/>
    <property type="project" value="InterPro"/>
</dbReference>
<dbReference type="GO" id="GO:0004801">
    <property type="term" value="F:transaldolase activity"/>
    <property type="evidence" value="ECO:0007669"/>
    <property type="project" value="UniProtKB-UniRule"/>
</dbReference>
<dbReference type="GO" id="GO:0005975">
    <property type="term" value="P:carbohydrate metabolic process"/>
    <property type="evidence" value="ECO:0007669"/>
    <property type="project" value="InterPro"/>
</dbReference>
<dbReference type="GO" id="GO:0006098">
    <property type="term" value="P:pentose-phosphate shunt"/>
    <property type="evidence" value="ECO:0007669"/>
    <property type="project" value="UniProtKB-UniRule"/>
</dbReference>
<dbReference type="CDD" id="cd00956">
    <property type="entry name" value="Transaldolase_FSA"/>
    <property type="match status" value="1"/>
</dbReference>
<dbReference type="FunFam" id="3.20.20.70:FF:000018">
    <property type="entry name" value="Probable transaldolase"/>
    <property type="match status" value="1"/>
</dbReference>
<dbReference type="Gene3D" id="3.20.20.70">
    <property type="entry name" value="Aldolase class I"/>
    <property type="match status" value="1"/>
</dbReference>
<dbReference type="HAMAP" id="MF_00494">
    <property type="entry name" value="Transaldolase_3b"/>
    <property type="match status" value="1"/>
</dbReference>
<dbReference type="InterPro" id="IPR013785">
    <property type="entry name" value="Aldolase_TIM"/>
</dbReference>
<dbReference type="InterPro" id="IPR001585">
    <property type="entry name" value="TAL/FSA"/>
</dbReference>
<dbReference type="InterPro" id="IPR022999">
    <property type="entry name" value="Transaldolase_3B"/>
</dbReference>
<dbReference type="InterPro" id="IPR004731">
    <property type="entry name" value="Transaldolase_3B/F6P_aldolase"/>
</dbReference>
<dbReference type="InterPro" id="IPR033919">
    <property type="entry name" value="TSA/FSA_arc/bac"/>
</dbReference>
<dbReference type="NCBIfam" id="TIGR00875">
    <property type="entry name" value="fsa_talC_mipB"/>
    <property type="match status" value="1"/>
</dbReference>
<dbReference type="PANTHER" id="PTHR10683">
    <property type="entry name" value="TRANSALDOLASE"/>
    <property type="match status" value="1"/>
</dbReference>
<dbReference type="PANTHER" id="PTHR10683:SF36">
    <property type="entry name" value="TRANSALDOLASE"/>
    <property type="match status" value="1"/>
</dbReference>
<dbReference type="Pfam" id="PF00923">
    <property type="entry name" value="TAL_FSA"/>
    <property type="match status" value="1"/>
</dbReference>
<dbReference type="SUPFAM" id="SSF51569">
    <property type="entry name" value="Aldolase"/>
    <property type="match status" value="1"/>
</dbReference>
<comment type="function">
    <text evidence="1">Transaldolase is important for the balance of metabolites in the pentose-phosphate pathway.</text>
</comment>
<comment type="catalytic activity">
    <reaction evidence="1">
        <text>D-sedoheptulose 7-phosphate + D-glyceraldehyde 3-phosphate = D-erythrose 4-phosphate + beta-D-fructose 6-phosphate</text>
        <dbReference type="Rhea" id="RHEA:17053"/>
        <dbReference type="ChEBI" id="CHEBI:16897"/>
        <dbReference type="ChEBI" id="CHEBI:57483"/>
        <dbReference type="ChEBI" id="CHEBI:57634"/>
        <dbReference type="ChEBI" id="CHEBI:59776"/>
        <dbReference type="EC" id="2.2.1.2"/>
    </reaction>
</comment>
<comment type="pathway">
    <text evidence="1">Carbohydrate degradation; pentose phosphate pathway; D-glyceraldehyde 3-phosphate and beta-D-fructose 6-phosphate from D-ribose 5-phosphate and D-xylulose 5-phosphate (non-oxidative stage): step 2/3.</text>
</comment>
<comment type="subcellular location">
    <subcellularLocation>
        <location evidence="1">Cytoplasm</location>
    </subcellularLocation>
</comment>
<comment type="similarity">
    <text evidence="1">Belongs to the transaldolase family. Type 3B subfamily.</text>
</comment>
<feature type="chain" id="PRO_1000126320" description="Probable transaldolase">
    <location>
        <begin position="1"/>
        <end position="221"/>
    </location>
</feature>
<feature type="active site" description="Schiff-base intermediate with substrate" evidence="1">
    <location>
        <position position="83"/>
    </location>
</feature>
<protein>
    <recommendedName>
        <fullName evidence="1">Probable transaldolase</fullName>
        <ecNumber evidence="1">2.2.1.2</ecNumber>
    </recommendedName>
</protein>
<name>TAL_HERA2</name>
<accession>A9AZ03</accession>
<evidence type="ECO:0000255" key="1">
    <source>
        <dbReference type="HAMAP-Rule" id="MF_00494"/>
    </source>
</evidence>